<evidence type="ECO:0000255" key="1">
    <source>
        <dbReference type="HAMAP-Rule" id="MF_00076"/>
    </source>
</evidence>
<accession>B0V8S1</accession>
<protein>
    <recommendedName>
        <fullName evidence="1">Imidazoleglycerol-phosphate dehydratase</fullName>
        <shortName evidence="1">IGPD</shortName>
        <ecNumber evidence="1">4.2.1.19</ecNumber>
    </recommendedName>
</protein>
<gene>
    <name evidence="1" type="primary">hisB</name>
    <name type="ordered locus">ABAYE0254</name>
</gene>
<proteinExistence type="inferred from homology"/>
<sequence>MRNVSMTQRISEVVRNTNETKIRVRLNLDGTGQGTLNTGVPFLDHMIDQIKRHGLFDIDIHCDGDLEIDDHHTVEDCGITLGQAFAQALGDKKGLRRYGHFYAPLDEALSRVVVDLSGRPGLFMDIPFTRARIGTFDVDLFSEFFQGFVNHALMTLHIDNLKGKNSHHQIESVFKALARALRMACEIDPRAENTIASTKGSL</sequence>
<keyword id="KW-0028">Amino-acid biosynthesis</keyword>
<keyword id="KW-0963">Cytoplasm</keyword>
<keyword id="KW-0368">Histidine biosynthesis</keyword>
<keyword id="KW-0456">Lyase</keyword>
<comment type="catalytic activity">
    <reaction evidence="1">
        <text>D-erythro-1-(imidazol-4-yl)glycerol 3-phosphate = 3-(imidazol-4-yl)-2-oxopropyl phosphate + H2O</text>
        <dbReference type="Rhea" id="RHEA:11040"/>
        <dbReference type="ChEBI" id="CHEBI:15377"/>
        <dbReference type="ChEBI" id="CHEBI:57766"/>
        <dbReference type="ChEBI" id="CHEBI:58278"/>
        <dbReference type="EC" id="4.2.1.19"/>
    </reaction>
</comment>
<comment type="pathway">
    <text evidence="1">Amino-acid biosynthesis; L-histidine biosynthesis; L-histidine from 5-phospho-alpha-D-ribose 1-diphosphate: step 6/9.</text>
</comment>
<comment type="subcellular location">
    <subcellularLocation>
        <location evidence="1">Cytoplasm</location>
    </subcellularLocation>
</comment>
<comment type="similarity">
    <text evidence="1">Belongs to the imidazoleglycerol-phosphate dehydratase family.</text>
</comment>
<organism>
    <name type="scientific">Acinetobacter baumannii (strain AYE)</name>
    <dbReference type="NCBI Taxonomy" id="509173"/>
    <lineage>
        <taxon>Bacteria</taxon>
        <taxon>Pseudomonadati</taxon>
        <taxon>Pseudomonadota</taxon>
        <taxon>Gammaproteobacteria</taxon>
        <taxon>Moraxellales</taxon>
        <taxon>Moraxellaceae</taxon>
        <taxon>Acinetobacter</taxon>
        <taxon>Acinetobacter calcoaceticus/baumannii complex</taxon>
    </lineage>
</organism>
<feature type="chain" id="PRO_1000092666" description="Imidazoleglycerol-phosphate dehydratase">
    <location>
        <begin position="1"/>
        <end position="202"/>
    </location>
</feature>
<name>HIS7_ACIBY</name>
<reference key="1">
    <citation type="journal article" date="2008" name="PLoS ONE">
        <title>Comparative analysis of Acinetobacters: three genomes for three lifestyles.</title>
        <authorList>
            <person name="Vallenet D."/>
            <person name="Nordmann P."/>
            <person name="Barbe V."/>
            <person name="Poirel L."/>
            <person name="Mangenot S."/>
            <person name="Bataille E."/>
            <person name="Dossat C."/>
            <person name="Gas S."/>
            <person name="Kreimeyer A."/>
            <person name="Lenoble P."/>
            <person name="Oztas S."/>
            <person name="Poulain J."/>
            <person name="Segurens B."/>
            <person name="Robert C."/>
            <person name="Abergel C."/>
            <person name="Claverie J.-M."/>
            <person name="Raoult D."/>
            <person name="Medigue C."/>
            <person name="Weissenbach J."/>
            <person name="Cruveiller S."/>
        </authorList>
    </citation>
    <scope>NUCLEOTIDE SEQUENCE [LARGE SCALE GENOMIC DNA]</scope>
    <source>
        <strain>AYE</strain>
    </source>
</reference>
<dbReference type="EC" id="4.2.1.19" evidence="1"/>
<dbReference type="EMBL" id="CU459141">
    <property type="protein sequence ID" value="CAM85235.1"/>
    <property type="molecule type" value="Genomic_DNA"/>
</dbReference>
<dbReference type="SMR" id="B0V8S1"/>
<dbReference type="EnsemblBacteria" id="CAM85235">
    <property type="protein sequence ID" value="CAM85235"/>
    <property type="gene ID" value="ABAYE0254"/>
</dbReference>
<dbReference type="KEGG" id="aby:ABAYE0254"/>
<dbReference type="HOGENOM" id="CLU_044308_3_0_6"/>
<dbReference type="UniPathway" id="UPA00031">
    <property type="reaction ID" value="UER00011"/>
</dbReference>
<dbReference type="GO" id="GO:0005737">
    <property type="term" value="C:cytoplasm"/>
    <property type="evidence" value="ECO:0007669"/>
    <property type="project" value="UniProtKB-SubCell"/>
</dbReference>
<dbReference type="GO" id="GO:0004424">
    <property type="term" value="F:imidazoleglycerol-phosphate dehydratase activity"/>
    <property type="evidence" value="ECO:0007669"/>
    <property type="project" value="UniProtKB-UniRule"/>
</dbReference>
<dbReference type="GO" id="GO:0000105">
    <property type="term" value="P:L-histidine biosynthetic process"/>
    <property type="evidence" value="ECO:0007669"/>
    <property type="project" value="UniProtKB-UniRule"/>
</dbReference>
<dbReference type="CDD" id="cd07914">
    <property type="entry name" value="IGPD"/>
    <property type="match status" value="1"/>
</dbReference>
<dbReference type="FunFam" id="3.30.230.40:FF:000002">
    <property type="entry name" value="Imidazoleglycerol-phosphate dehydratase"/>
    <property type="match status" value="1"/>
</dbReference>
<dbReference type="FunFam" id="3.30.230.40:FF:000003">
    <property type="entry name" value="Imidazoleglycerol-phosphate dehydratase HisB"/>
    <property type="match status" value="1"/>
</dbReference>
<dbReference type="Gene3D" id="3.30.230.40">
    <property type="entry name" value="Imidazole glycerol phosphate dehydratase, domain 1"/>
    <property type="match status" value="2"/>
</dbReference>
<dbReference type="HAMAP" id="MF_00076">
    <property type="entry name" value="HisB"/>
    <property type="match status" value="1"/>
</dbReference>
<dbReference type="InterPro" id="IPR038494">
    <property type="entry name" value="IGPD_sf"/>
</dbReference>
<dbReference type="InterPro" id="IPR000807">
    <property type="entry name" value="ImidazoleglycerolP_deHydtase"/>
</dbReference>
<dbReference type="InterPro" id="IPR020565">
    <property type="entry name" value="ImidazoleglycerP_deHydtase_CS"/>
</dbReference>
<dbReference type="InterPro" id="IPR020568">
    <property type="entry name" value="Ribosomal_Su5_D2-typ_SF"/>
</dbReference>
<dbReference type="NCBIfam" id="NF002106">
    <property type="entry name" value="PRK00951.1-1"/>
    <property type="match status" value="1"/>
</dbReference>
<dbReference type="NCBIfam" id="NF002109">
    <property type="entry name" value="PRK00951.1-5"/>
    <property type="match status" value="1"/>
</dbReference>
<dbReference type="NCBIfam" id="NF002111">
    <property type="entry name" value="PRK00951.2-1"/>
    <property type="match status" value="1"/>
</dbReference>
<dbReference type="NCBIfam" id="NF002114">
    <property type="entry name" value="PRK00951.2-4"/>
    <property type="match status" value="1"/>
</dbReference>
<dbReference type="PANTHER" id="PTHR23133:SF2">
    <property type="entry name" value="IMIDAZOLEGLYCEROL-PHOSPHATE DEHYDRATASE"/>
    <property type="match status" value="1"/>
</dbReference>
<dbReference type="PANTHER" id="PTHR23133">
    <property type="entry name" value="IMIDAZOLEGLYCEROL-PHOSPHATE DEHYDRATASE HIS7"/>
    <property type="match status" value="1"/>
</dbReference>
<dbReference type="Pfam" id="PF00475">
    <property type="entry name" value="IGPD"/>
    <property type="match status" value="1"/>
</dbReference>
<dbReference type="SUPFAM" id="SSF54211">
    <property type="entry name" value="Ribosomal protein S5 domain 2-like"/>
    <property type="match status" value="2"/>
</dbReference>
<dbReference type="PROSITE" id="PS00954">
    <property type="entry name" value="IGP_DEHYDRATASE_1"/>
    <property type="match status" value="1"/>
</dbReference>
<dbReference type="PROSITE" id="PS00955">
    <property type="entry name" value="IGP_DEHYDRATASE_2"/>
    <property type="match status" value="1"/>
</dbReference>